<feature type="chain" id="PRO_0000396546" description="Lon protease">
    <location>
        <begin position="1"/>
        <end position="778"/>
    </location>
</feature>
<feature type="domain" description="Lon N-terminal" evidence="3">
    <location>
        <begin position="8"/>
        <end position="202"/>
    </location>
</feature>
<feature type="domain" description="Lon proteolytic" evidence="2">
    <location>
        <begin position="591"/>
        <end position="772"/>
    </location>
</feature>
<feature type="active site" evidence="1">
    <location>
        <position position="678"/>
    </location>
</feature>
<feature type="active site" evidence="1">
    <location>
        <position position="721"/>
    </location>
</feature>
<feature type="binding site" evidence="1">
    <location>
        <begin position="354"/>
        <end position="361"/>
    </location>
    <ligand>
        <name>ATP</name>
        <dbReference type="ChEBI" id="CHEBI:30616"/>
    </ligand>
</feature>
<reference key="1">
    <citation type="journal article" date="2001" name="J. Bacteriol.">
        <title>Genome sequence and comparative analysis of the solvent-producing bacterium Clostridium acetobutylicum.</title>
        <authorList>
            <person name="Noelling J."/>
            <person name="Breton G."/>
            <person name="Omelchenko M.V."/>
            <person name="Makarova K.S."/>
            <person name="Zeng Q."/>
            <person name="Gibson R."/>
            <person name="Lee H.M."/>
            <person name="Dubois J."/>
            <person name="Qiu D."/>
            <person name="Hitti J."/>
            <person name="Wolf Y.I."/>
            <person name="Tatusov R.L."/>
            <person name="Sabathe F."/>
            <person name="Doucette-Stamm L.A."/>
            <person name="Soucaille P."/>
            <person name="Daly M.J."/>
            <person name="Bennett G.N."/>
            <person name="Koonin E.V."/>
            <person name="Smith D.R."/>
        </authorList>
    </citation>
    <scope>NUCLEOTIDE SEQUENCE [LARGE SCALE GENOMIC DNA]</scope>
    <source>
        <strain>ATCC 824 / DSM 792 / JCM 1419 / IAM 19013 / LMG 5710 / NBRC 13948 / NRRL B-527 / VKM B-1787 / 2291 / W</strain>
    </source>
</reference>
<proteinExistence type="inferred from homology"/>
<gene>
    <name evidence="1" type="primary">lon</name>
    <name type="ordered locus">CA_C2637</name>
</gene>
<name>LON_CLOAB</name>
<organism>
    <name type="scientific">Clostridium acetobutylicum (strain ATCC 824 / DSM 792 / JCM 1419 / IAM 19013 / LMG 5710 / NBRC 13948 / NRRL B-527 / VKM B-1787 / 2291 / W)</name>
    <dbReference type="NCBI Taxonomy" id="272562"/>
    <lineage>
        <taxon>Bacteria</taxon>
        <taxon>Bacillati</taxon>
        <taxon>Bacillota</taxon>
        <taxon>Clostridia</taxon>
        <taxon>Eubacteriales</taxon>
        <taxon>Clostridiaceae</taxon>
        <taxon>Clostridium</taxon>
    </lineage>
</organism>
<keyword id="KW-0067">ATP-binding</keyword>
<keyword id="KW-0963">Cytoplasm</keyword>
<keyword id="KW-0378">Hydrolase</keyword>
<keyword id="KW-0547">Nucleotide-binding</keyword>
<keyword id="KW-0645">Protease</keyword>
<keyword id="KW-1185">Reference proteome</keyword>
<keyword id="KW-0720">Serine protease</keyword>
<keyword id="KW-0346">Stress response</keyword>
<protein>
    <recommendedName>
        <fullName evidence="1">Lon protease</fullName>
        <ecNumber evidence="1">3.4.21.53</ecNumber>
    </recommendedName>
    <alternativeName>
        <fullName evidence="1">ATP-dependent protease La</fullName>
    </alternativeName>
</protein>
<dbReference type="EC" id="3.4.21.53" evidence="1"/>
<dbReference type="EMBL" id="AE001437">
    <property type="protein sequence ID" value="AAK80584.1"/>
    <property type="molecule type" value="Genomic_DNA"/>
</dbReference>
<dbReference type="PIR" id="E97224">
    <property type="entry name" value="E97224"/>
</dbReference>
<dbReference type="RefSeq" id="NP_349244.1">
    <property type="nucleotide sequence ID" value="NC_003030.1"/>
</dbReference>
<dbReference type="RefSeq" id="WP_010965925.1">
    <property type="nucleotide sequence ID" value="NC_003030.1"/>
</dbReference>
<dbReference type="SMR" id="Q97FT9"/>
<dbReference type="STRING" id="272562.CA_C2637"/>
<dbReference type="MEROPS" id="S16.001"/>
<dbReference type="GeneID" id="44999105"/>
<dbReference type="KEGG" id="cac:CA_C2637"/>
<dbReference type="PATRIC" id="fig|272562.8.peg.2826"/>
<dbReference type="eggNOG" id="COG0466">
    <property type="taxonomic scope" value="Bacteria"/>
</dbReference>
<dbReference type="HOGENOM" id="CLU_004109_4_3_9"/>
<dbReference type="OrthoDB" id="9803599at2"/>
<dbReference type="Proteomes" id="UP000000814">
    <property type="component" value="Chromosome"/>
</dbReference>
<dbReference type="GO" id="GO:0005737">
    <property type="term" value="C:cytoplasm"/>
    <property type="evidence" value="ECO:0007669"/>
    <property type="project" value="UniProtKB-SubCell"/>
</dbReference>
<dbReference type="GO" id="GO:0005524">
    <property type="term" value="F:ATP binding"/>
    <property type="evidence" value="ECO:0007669"/>
    <property type="project" value="UniProtKB-UniRule"/>
</dbReference>
<dbReference type="GO" id="GO:0016887">
    <property type="term" value="F:ATP hydrolysis activity"/>
    <property type="evidence" value="ECO:0007669"/>
    <property type="project" value="UniProtKB-UniRule"/>
</dbReference>
<dbReference type="GO" id="GO:0004176">
    <property type="term" value="F:ATP-dependent peptidase activity"/>
    <property type="evidence" value="ECO:0007669"/>
    <property type="project" value="UniProtKB-UniRule"/>
</dbReference>
<dbReference type="GO" id="GO:0043565">
    <property type="term" value="F:sequence-specific DNA binding"/>
    <property type="evidence" value="ECO:0007669"/>
    <property type="project" value="UniProtKB-UniRule"/>
</dbReference>
<dbReference type="GO" id="GO:0004252">
    <property type="term" value="F:serine-type endopeptidase activity"/>
    <property type="evidence" value="ECO:0007669"/>
    <property type="project" value="UniProtKB-UniRule"/>
</dbReference>
<dbReference type="GO" id="GO:0034605">
    <property type="term" value="P:cellular response to heat"/>
    <property type="evidence" value="ECO:0007669"/>
    <property type="project" value="UniProtKB-UniRule"/>
</dbReference>
<dbReference type="GO" id="GO:0006515">
    <property type="term" value="P:protein quality control for misfolded or incompletely synthesized proteins"/>
    <property type="evidence" value="ECO:0007669"/>
    <property type="project" value="UniProtKB-UniRule"/>
</dbReference>
<dbReference type="CDD" id="cd19500">
    <property type="entry name" value="RecA-like_Lon"/>
    <property type="match status" value="1"/>
</dbReference>
<dbReference type="FunFam" id="3.40.50.300:FF:000021">
    <property type="entry name" value="Lon protease homolog"/>
    <property type="match status" value="1"/>
</dbReference>
<dbReference type="Gene3D" id="1.10.8.60">
    <property type="match status" value="1"/>
</dbReference>
<dbReference type="Gene3D" id="1.20.5.5270">
    <property type="match status" value="1"/>
</dbReference>
<dbReference type="Gene3D" id="1.20.58.1480">
    <property type="match status" value="1"/>
</dbReference>
<dbReference type="Gene3D" id="3.30.230.10">
    <property type="match status" value="1"/>
</dbReference>
<dbReference type="Gene3D" id="2.30.130.40">
    <property type="entry name" value="LON domain-like"/>
    <property type="match status" value="1"/>
</dbReference>
<dbReference type="Gene3D" id="3.40.50.300">
    <property type="entry name" value="P-loop containing nucleotide triphosphate hydrolases"/>
    <property type="match status" value="1"/>
</dbReference>
<dbReference type="HAMAP" id="MF_01973">
    <property type="entry name" value="lon_bact"/>
    <property type="match status" value="1"/>
</dbReference>
<dbReference type="InterPro" id="IPR003593">
    <property type="entry name" value="AAA+_ATPase"/>
</dbReference>
<dbReference type="InterPro" id="IPR003959">
    <property type="entry name" value="ATPase_AAA_core"/>
</dbReference>
<dbReference type="InterPro" id="IPR027543">
    <property type="entry name" value="Lon_bac"/>
</dbReference>
<dbReference type="InterPro" id="IPR004815">
    <property type="entry name" value="Lon_bac/euk-typ"/>
</dbReference>
<dbReference type="InterPro" id="IPR054594">
    <property type="entry name" value="Lon_lid"/>
</dbReference>
<dbReference type="InterPro" id="IPR008269">
    <property type="entry name" value="Lon_proteolytic"/>
</dbReference>
<dbReference type="InterPro" id="IPR027065">
    <property type="entry name" value="Lon_Prtase"/>
</dbReference>
<dbReference type="InterPro" id="IPR003111">
    <property type="entry name" value="Lon_prtase_N"/>
</dbReference>
<dbReference type="InterPro" id="IPR046336">
    <property type="entry name" value="Lon_prtase_N_sf"/>
</dbReference>
<dbReference type="InterPro" id="IPR027417">
    <property type="entry name" value="P-loop_NTPase"/>
</dbReference>
<dbReference type="InterPro" id="IPR008268">
    <property type="entry name" value="Peptidase_S16_AS"/>
</dbReference>
<dbReference type="InterPro" id="IPR015947">
    <property type="entry name" value="PUA-like_sf"/>
</dbReference>
<dbReference type="InterPro" id="IPR020568">
    <property type="entry name" value="Ribosomal_Su5_D2-typ_SF"/>
</dbReference>
<dbReference type="InterPro" id="IPR014721">
    <property type="entry name" value="Ribsml_uS5_D2-typ_fold_subgr"/>
</dbReference>
<dbReference type="NCBIfam" id="TIGR00763">
    <property type="entry name" value="lon"/>
    <property type="match status" value="1"/>
</dbReference>
<dbReference type="PANTHER" id="PTHR10046">
    <property type="entry name" value="ATP DEPENDENT LON PROTEASE FAMILY MEMBER"/>
    <property type="match status" value="1"/>
</dbReference>
<dbReference type="Pfam" id="PF00004">
    <property type="entry name" value="AAA"/>
    <property type="match status" value="1"/>
</dbReference>
<dbReference type="Pfam" id="PF05362">
    <property type="entry name" value="Lon_C"/>
    <property type="match status" value="1"/>
</dbReference>
<dbReference type="Pfam" id="PF22667">
    <property type="entry name" value="Lon_lid"/>
    <property type="match status" value="1"/>
</dbReference>
<dbReference type="Pfam" id="PF02190">
    <property type="entry name" value="LON_substr_bdg"/>
    <property type="match status" value="1"/>
</dbReference>
<dbReference type="PIRSF" id="PIRSF001174">
    <property type="entry name" value="Lon_proteas"/>
    <property type="match status" value="1"/>
</dbReference>
<dbReference type="PRINTS" id="PR00830">
    <property type="entry name" value="ENDOLAPTASE"/>
</dbReference>
<dbReference type="SMART" id="SM00382">
    <property type="entry name" value="AAA"/>
    <property type="match status" value="1"/>
</dbReference>
<dbReference type="SMART" id="SM00464">
    <property type="entry name" value="LON"/>
    <property type="match status" value="1"/>
</dbReference>
<dbReference type="SUPFAM" id="SSF52540">
    <property type="entry name" value="P-loop containing nucleoside triphosphate hydrolases"/>
    <property type="match status" value="1"/>
</dbReference>
<dbReference type="SUPFAM" id="SSF88697">
    <property type="entry name" value="PUA domain-like"/>
    <property type="match status" value="1"/>
</dbReference>
<dbReference type="SUPFAM" id="SSF54211">
    <property type="entry name" value="Ribosomal protein S5 domain 2-like"/>
    <property type="match status" value="1"/>
</dbReference>
<dbReference type="PROSITE" id="PS51787">
    <property type="entry name" value="LON_N"/>
    <property type="match status" value="1"/>
</dbReference>
<dbReference type="PROSITE" id="PS51786">
    <property type="entry name" value="LON_PROTEOLYTIC"/>
    <property type="match status" value="1"/>
</dbReference>
<dbReference type="PROSITE" id="PS01046">
    <property type="entry name" value="LON_SER"/>
    <property type="match status" value="1"/>
</dbReference>
<evidence type="ECO:0000255" key="1">
    <source>
        <dbReference type="HAMAP-Rule" id="MF_01973"/>
    </source>
</evidence>
<evidence type="ECO:0000255" key="2">
    <source>
        <dbReference type="PROSITE-ProRule" id="PRU01122"/>
    </source>
</evidence>
<evidence type="ECO:0000255" key="3">
    <source>
        <dbReference type="PROSITE-ProRule" id="PRU01123"/>
    </source>
</evidence>
<sequence length="778" mass="87599">MNQENKVLPLIPLRGLIVFPYMVVHFDVGRDKSIEALEKAMMNDQQIFLSTQKDAKIEEPNEDDINSVGTICSIKQILRLPGDAVRVLVEGISRGKIDKYLKQEPFIEAEITEFKDEDNYEEYEIKALMRIITKEFGKYVKLSGAVTKDAVDFLKDIKEPGKFADIVSSYLIIKQEQKQSVLNSIDEKERLENVLTVIKDELQILELERNIGVKVKEKIDKSQREYYLREQIKVMQDQLGDDDEEKAEIKEYTQKIKKGKLTKEAKEKALHELKKLENAGAYSPEGAGIKTYLDWILSLPWKDKTKDNLDIKRAREILNKEHYGLSDVKDRIIEYLAVKKMSKSLKGPILCLVGPPGVGKTSIAKSIANAVNRNFVRISLGGVNDEAEIRGHRRTYVGAIPGRIIYGMKQAKSNNPLMLLDEIDKMSSSYKGESADALLEVLDTSENNKFRDNYLELDFDLSDVMFVTTANTLETIPRPLMDRMEIIEVSGYTYEEKFHIAKEHLIPKQLEEHNMPEDKKITFMDSSIYYIIENYTRESGVRSLERKIAAIIRKIITEIVEKDKSSISVNSRTVKKYLGEDVFSADKIDKEDKIGVVTGMAWTAYGGDTLPVEAVIMPGNGKLQLTGQLGDVMKESAQAGYSYVRANSVKYGIDKEFYKNKDIHVHVPEGAVPKDGPSAGVTMITAMVSALSDKKVKHNVAMTGEITLTGRVLAIGGLKEKTLAAYRAGVDTIIIPKQNEKDINKVPKAIRGKIKFILAEEVDTVLENALIGGINNDN</sequence>
<comment type="function">
    <text evidence="1">ATP-dependent serine protease that mediates the selective degradation of mutant and abnormal proteins as well as certain short-lived regulatory proteins. Required for cellular homeostasis and for survival from DNA damage and developmental changes induced by stress. Degrades polypeptides processively to yield small peptide fragments that are 5 to 10 amino acids long. Binds to DNA in a double-stranded, site-specific manner.</text>
</comment>
<comment type="catalytic activity">
    <reaction evidence="1">
        <text>Hydrolysis of proteins in presence of ATP.</text>
        <dbReference type="EC" id="3.4.21.53"/>
    </reaction>
</comment>
<comment type="subunit">
    <text evidence="1">Homohexamer. Organized in a ring with a central cavity.</text>
</comment>
<comment type="subcellular location">
    <subcellularLocation>
        <location evidence="1">Cytoplasm</location>
    </subcellularLocation>
</comment>
<comment type="induction">
    <text evidence="1">By heat shock.</text>
</comment>
<comment type="similarity">
    <text evidence="1">Belongs to the peptidase S16 family.</text>
</comment>
<accession>Q97FT9</accession>